<proteinExistence type="inferred from homology"/>
<evidence type="ECO:0000250" key="1">
    <source>
        <dbReference type="UniProtKB" id="P36394"/>
    </source>
</evidence>
<evidence type="ECO:0000250" key="2">
    <source>
        <dbReference type="UniProtKB" id="Q05066"/>
    </source>
</evidence>
<evidence type="ECO:0000255" key="3">
    <source>
        <dbReference type="PROSITE-ProRule" id="PRU00267"/>
    </source>
</evidence>
<evidence type="ECO:0000305" key="4"/>
<protein>
    <recommendedName>
        <fullName>Sex-determining region Y protein</fullName>
    </recommendedName>
    <alternativeName>
        <fullName>Testis-determining factor</fullName>
    </alternativeName>
</protein>
<keyword id="KW-0010">Activator</keyword>
<keyword id="KW-0112">Calmodulin-binding</keyword>
<keyword id="KW-0963">Cytoplasm</keyword>
<keyword id="KW-0221">Differentiation</keyword>
<keyword id="KW-0238">DNA-binding</keyword>
<keyword id="KW-0539">Nucleus</keyword>
<keyword id="KW-0726">Sexual differentiation</keyword>
<keyword id="KW-0804">Transcription</keyword>
<keyword id="KW-0805">Transcription regulation</keyword>
<feature type="chain" id="PRO_0000048680" description="Sex-determining region Y protein">
    <location>
        <begin position="1" status="less than"/>
        <end position="55" status="greater than"/>
    </location>
</feature>
<feature type="DNA-binding region" description="HMG box" evidence="3">
    <location>
        <begin position="1" status="less than"/>
        <end position="55" status="greater than"/>
    </location>
</feature>
<feature type="non-terminal residue">
    <location>
        <position position="1"/>
    </location>
</feature>
<feature type="non-terminal residue">
    <location>
        <position position="55"/>
    </location>
</feature>
<dbReference type="EMBL" id="Z26913">
    <property type="protein sequence ID" value="CAA81539.1"/>
    <property type="molecule type" value="Genomic_DNA"/>
</dbReference>
<dbReference type="SMR" id="P36392"/>
<dbReference type="GO" id="GO:0005737">
    <property type="term" value="C:cytoplasm"/>
    <property type="evidence" value="ECO:0007669"/>
    <property type="project" value="UniProtKB-SubCell"/>
</dbReference>
<dbReference type="GO" id="GO:0016607">
    <property type="term" value="C:nuclear speck"/>
    <property type="evidence" value="ECO:0007669"/>
    <property type="project" value="UniProtKB-SubCell"/>
</dbReference>
<dbReference type="GO" id="GO:0005634">
    <property type="term" value="C:nucleus"/>
    <property type="evidence" value="ECO:0000250"/>
    <property type="project" value="UniProtKB"/>
</dbReference>
<dbReference type="GO" id="GO:0005516">
    <property type="term" value="F:calmodulin binding"/>
    <property type="evidence" value="ECO:0007669"/>
    <property type="project" value="UniProtKB-KW"/>
</dbReference>
<dbReference type="GO" id="GO:0001228">
    <property type="term" value="F:DNA-binding transcription activator activity, RNA polymerase II-specific"/>
    <property type="evidence" value="ECO:0007669"/>
    <property type="project" value="TreeGrafter"/>
</dbReference>
<dbReference type="GO" id="GO:0000978">
    <property type="term" value="F:RNA polymerase II cis-regulatory region sequence-specific DNA binding"/>
    <property type="evidence" value="ECO:0007669"/>
    <property type="project" value="TreeGrafter"/>
</dbReference>
<dbReference type="GO" id="GO:0030154">
    <property type="term" value="P:cell differentiation"/>
    <property type="evidence" value="ECO:0007669"/>
    <property type="project" value="UniProtKB-KW"/>
</dbReference>
<dbReference type="GO" id="GO:0007548">
    <property type="term" value="P:sex differentiation"/>
    <property type="evidence" value="ECO:0007669"/>
    <property type="project" value="UniProtKB-KW"/>
</dbReference>
<dbReference type="FunFam" id="1.10.30.10:FF:000002">
    <property type="entry name" value="transcription factor Sox-2"/>
    <property type="match status" value="1"/>
</dbReference>
<dbReference type="Gene3D" id="1.10.30.10">
    <property type="entry name" value="High mobility group box domain"/>
    <property type="match status" value="1"/>
</dbReference>
<dbReference type="InterPro" id="IPR009071">
    <property type="entry name" value="HMG_box_dom"/>
</dbReference>
<dbReference type="InterPro" id="IPR036910">
    <property type="entry name" value="HMG_box_dom_sf"/>
</dbReference>
<dbReference type="InterPro" id="IPR050140">
    <property type="entry name" value="SRY-related_HMG-box_TF-like"/>
</dbReference>
<dbReference type="PANTHER" id="PTHR10270:SF161">
    <property type="entry name" value="SEX-DETERMINING REGION Y PROTEIN"/>
    <property type="match status" value="1"/>
</dbReference>
<dbReference type="PANTHER" id="PTHR10270">
    <property type="entry name" value="SOX TRANSCRIPTION FACTOR"/>
    <property type="match status" value="1"/>
</dbReference>
<dbReference type="Pfam" id="PF00505">
    <property type="entry name" value="HMG_box"/>
    <property type="match status" value="1"/>
</dbReference>
<dbReference type="SMART" id="SM00398">
    <property type="entry name" value="HMG"/>
    <property type="match status" value="1"/>
</dbReference>
<dbReference type="SUPFAM" id="SSF47095">
    <property type="entry name" value="HMG-box"/>
    <property type="match status" value="1"/>
</dbReference>
<dbReference type="PROSITE" id="PS50118">
    <property type="entry name" value="HMG_BOX_2"/>
    <property type="match status" value="1"/>
</dbReference>
<name>SRY_MELME</name>
<organism>
    <name type="scientific">Meles meles</name>
    <name type="common">Eurasian badger</name>
    <dbReference type="NCBI Taxonomy" id="9662"/>
    <lineage>
        <taxon>Eukaryota</taxon>
        <taxon>Metazoa</taxon>
        <taxon>Chordata</taxon>
        <taxon>Craniata</taxon>
        <taxon>Vertebrata</taxon>
        <taxon>Euteleostomi</taxon>
        <taxon>Mammalia</taxon>
        <taxon>Eutheria</taxon>
        <taxon>Laurasiatheria</taxon>
        <taxon>Carnivora</taxon>
        <taxon>Caniformia</taxon>
        <taxon>Musteloidea</taxon>
        <taxon>Mustelidae</taxon>
        <taxon>Melinae</taxon>
        <taxon>Meles</taxon>
    </lineage>
</organism>
<accession>P36392</accession>
<sequence>MVWSRDQRRKVALENPQMQNSEISKQLGCQWKMLTEAEKRPFFEEAQRLQAMHRE</sequence>
<reference key="1">
    <citation type="journal article" date="1993" name="Mol. Ecol.">
        <title>Primers for the differential amplification of the sex-determining region Y gene in a range of mammal species.</title>
        <authorList>
            <person name="Griffiths R."/>
            <person name="Tiwari B."/>
        </authorList>
    </citation>
    <scope>NUCLEOTIDE SEQUENCE [GENOMIC DNA]</scope>
</reference>
<comment type="function">
    <text evidence="1 2">Transcriptional regulator that controls a genetic switch in male development. It is necessary and sufficient for initiating male sex determination by directing the development of supporting cell precursors (pre-Sertoli cells) as Sertoli rather than granulosa cells. Involved in different aspects of gene regulation including promoter activation or repression. Binds to the DNA consensus sequence 5'-[AT]AACAA[AT]-3'. SRY HMG box recognizes DNA by partial intercalation in the minor groove and promotes DNA bending. Also involved in pre-mRNA splicing (By similarity). In male adult brain involved in the maintenance of motor functions of dopaminergic neurons (By similarity).</text>
</comment>
<comment type="subunit">
    <text evidence="2">Interacts with CALM, EP300, HDAC3, KPNB1, ZNF208 isoform KRAB-O, PARP1, SLC9A3R2 and WT1. The interaction with EP300 modulates its DNA-binding activity. The interaction with KPNB1 is sensitive to dissociation by Ran in the GTP-bound form. Interaction with PARP1 impaired its DNA-binding activity.</text>
</comment>
<comment type="subcellular location">
    <subcellularLocation>
        <location evidence="2">Nucleus speckle</location>
    </subcellularLocation>
    <subcellularLocation>
        <location evidence="2">Cytoplasm</location>
    </subcellularLocation>
    <subcellularLocation>
        <location evidence="2">Nucleus</location>
    </subcellularLocation>
</comment>
<comment type="similarity">
    <text evidence="4">Belongs to the SRY family.</text>
</comment>
<comment type="online information" name="Protein Spotlight">
    <link uri="https://www.proteinspotlight.org/back_issues/080"/>
    <text>The tenuous nature of sex - Issue 80 of March 2007</text>
</comment>
<gene>
    <name type="primary">SRY</name>
    <name type="synonym">TDF</name>
</gene>